<organism>
    <name type="scientific">Porphyromonas gingivalis (strain ATCC 33277 / DSM 20709 / CIP 103683 / JCM 12257 / NCTC 11834 / 2561)</name>
    <dbReference type="NCBI Taxonomy" id="431947"/>
    <lineage>
        <taxon>Bacteria</taxon>
        <taxon>Pseudomonadati</taxon>
        <taxon>Bacteroidota</taxon>
        <taxon>Bacteroidia</taxon>
        <taxon>Bacteroidales</taxon>
        <taxon>Porphyromonadaceae</taxon>
        <taxon>Porphyromonas</taxon>
    </lineage>
</organism>
<keyword id="KW-0119">Carbohydrate metabolism</keyword>
<keyword id="KW-0456">Lyase</keyword>
<feature type="chain" id="PRO_1000092310" description="N-acetylmuramic acid 6-phosphate etherase">
    <location>
        <begin position="1"/>
        <end position="274"/>
    </location>
</feature>
<feature type="domain" description="SIS" evidence="1">
    <location>
        <begin position="52"/>
        <end position="215"/>
    </location>
</feature>
<feature type="active site" description="Proton donor" evidence="1">
    <location>
        <position position="80"/>
    </location>
</feature>
<feature type="active site" evidence="1">
    <location>
        <position position="111"/>
    </location>
</feature>
<gene>
    <name evidence="1" type="primary">murQ</name>
    <name type="ordered locus">PGN_1196</name>
</gene>
<evidence type="ECO:0000255" key="1">
    <source>
        <dbReference type="HAMAP-Rule" id="MF_00068"/>
    </source>
</evidence>
<accession>B2RK20</accession>
<comment type="function">
    <text evidence="1">Specifically catalyzes the cleavage of the D-lactyl ether substituent of MurNAc 6-phosphate, producing GlcNAc 6-phosphate and D-lactate.</text>
</comment>
<comment type="catalytic activity">
    <reaction evidence="1">
        <text>N-acetyl-D-muramate 6-phosphate + H2O = N-acetyl-D-glucosamine 6-phosphate + (R)-lactate</text>
        <dbReference type="Rhea" id="RHEA:26410"/>
        <dbReference type="ChEBI" id="CHEBI:15377"/>
        <dbReference type="ChEBI" id="CHEBI:16004"/>
        <dbReference type="ChEBI" id="CHEBI:57513"/>
        <dbReference type="ChEBI" id="CHEBI:58722"/>
        <dbReference type="EC" id="4.2.1.126"/>
    </reaction>
</comment>
<comment type="pathway">
    <text evidence="1">Amino-sugar metabolism; N-acetylmuramate degradation.</text>
</comment>
<comment type="subunit">
    <text evidence="1">Homodimer.</text>
</comment>
<comment type="miscellaneous">
    <text evidence="1">A lyase-type mechanism (elimination/hydration) is suggested for the cleavage of the lactyl ether bond of MurNAc 6-phosphate, with the formation of an alpha,beta-unsaturated aldehyde intermediate with (E)-stereochemistry, followed by the syn addition of water to give product.</text>
</comment>
<comment type="similarity">
    <text evidence="1">Belongs to the GCKR-like family. MurNAc-6-P etherase subfamily.</text>
</comment>
<name>MURQ_PORG3</name>
<proteinExistence type="inferred from homology"/>
<reference key="1">
    <citation type="journal article" date="2008" name="DNA Res.">
        <title>Determination of the genome sequence of Porphyromonas gingivalis strain ATCC 33277 and genomic comparison with strain W83 revealed extensive genome rearrangements in P. gingivalis.</title>
        <authorList>
            <person name="Naito M."/>
            <person name="Hirakawa H."/>
            <person name="Yamashita A."/>
            <person name="Ohara N."/>
            <person name="Shoji M."/>
            <person name="Yukitake H."/>
            <person name="Nakayama K."/>
            <person name="Toh H."/>
            <person name="Yoshimura F."/>
            <person name="Kuhara S."/>
            <person name="Hattori M."/>
            <person name="Hayashi T."/>
            <person name="Nakayama K."/>
        </authorList>
    </citation>
    <scope>NUCLEOTIDE SEQUENCE [LARGE SCALE GENOMIC DNA]</scope>
    <source>
        <strain>ATCC 33277 / DSM 20709 / CIP 103683 / JCM 12257 / NCTC 11834 / 2561</strain>
    </source>
</reference>
<sequence>MFEKITEQPSLYDRLEEKSTREILEDINREDRKVAEAVSRTIPMIERLVEQIVPRMEQGGRLFYMGAGTSGRLGVLDASEIPPTFGMPPTFVIGLIAGGDRALRNPVEKAEDNTERGWEELLSHGVNSSDTVIGIAASGTTPYVIGALREARRHGILTGCICSNIGSPLAAEADYPIEVIVGPEYVTGSSRMKSGTAQKMILNMISTSIMIRLGRVKGNRMVNMQLSNNKLIDRGTRMLMSEFDLSYEDARTLLLRHGSVRIASESMKQKPPKK</sequence>
<dbReference type="EC" id="4.2.1.126" evidence="1"/>
<dbReference type="EMBL" id="AP009380">
    <property type="protein sequence ID" value="BAG33715.1"/>
    <property type="molecule type" value="Genomic_DNA"/>
</dbReference>
<dbReference type="RefSeq" id="WP_012458095.1">
    <property type="nucleotide sequence ID" value="NC_010729.1"/>
</dbReference>
<dbReference type="SMR" id="B2RK20"/>
<dbReference type="GeneID" id="29256403"/>
<dbReference type="KEGG" id="pgn:PGN_1196"/>
<dbReference type="eggNOG" id="COG2103">
    <property type="taxonomic scope" value="Bacteria"/>
</dbReference>
<dbReference type="HOGENOM" id="CLU_049049_1_1_10"/>
<dbReference type="OrthoDB" id="9813395at2"/>
<dbReference type="BioCyc" id="PGIN431947:G1G2V-1370-MONOMER"/>
<dbReference type="UniPathway" id="UPA00342"/>
<dbReference type="Proteomes" id="UP000008842">
    <property type="component" value="Chromosome"/>
</dbReference>
<dbReference type="GO" id="GO:0097367">
    <property type="term" value="F:carbohydrate derivative binding"/>
    <property type="evidence" value="ECO:0007669"/>
    <property type="project" value="InterPro"/>
</dbReference>
<dbReference type="GO" id="GO:0016835">
    <property type="term" value="F:carbon-oxygen lyase activity"/>
    <property type="evidence" value="ECO:0007669"/>
    <property type="project" value="UniProtKB-UniRule"/>
</dbReference>
<dbReference type="GO" id="GO:0016803">
    <property type="term" value="F:ether hydrolase activity"/>
    <property type="evidence" value="ECO:0007669"/>
    <property type="project" value="TreeGrafter"/>
</dbReference>
<dbReference type="GO" id="GO:0046348">
    <property type="term" value="P:amino sugar catabolic process"/>
    <property type="evidence" value="ECO:0007669"/>
    <property type="project" value="InterPro"/>
</dbReference>
<dbReference type="GO" id="GO:0097173">
    <property type="term" value="P:N-acetylmuramic acid catabolic process"/>
    <property type="evidence" value="ECO:0007669"/>
    <property type="project" value="UniProtKB-UniPathway"/>
</dbReference>
<dbReference type="GO" id="GO:0009254">
    <property type="term" value="P:peptidoglycan turnover"/>
    <property type="evidence" value="ECO:0007669"/>
    <property type="project" value="TreeGrafter"/>
</dbReference>
<dbReference type="CDD" id="cd05007">
    <property type="entry name" value="SIS_Etherase"/>
    <property type="match status" value="1"/>
</dbReference>
<dbReference type="FunFam" id="3.40.50.10490:FF:000014">
    <property type="entry name" value="N-acetylmuramic acid 6-phosphate etherase"/>
    <property type="match status" value="1"/>
</dbReference>
<dbReference type="Gene3D" id="3.40.50.10490">
    <property type="entry name" value="Glucose-6-phosphate isomerase like protein, domain 1"/>
    <property type="match status" value="1"/>
</dbReference>
<dbReference type="HAMAP" id="MF_00068">
    <property type="entry name" value="MurQ"/>
    <property type="match status" value="1"/>
</dbReference>
<dbReference type="InterPro" id="IPR005488">
    <property type="entry name" value="Etherase_MurQ"/>
</dbReference>
<dbReference type="InterPro" id="IPR005486">
    <property type="entry name" value="Glucokinase_regulatory_CS"/>
</dbReference>
<dbReference type="InterPro" id="IPR040190">
    <property type="entry name" value="MURQ/GCKR"/>
</dbReference>
<dbReference type="InterPro" id="IPR001347">
    <property type="entry name" value="SIS_dom"/>
</dbReference>
<dbReference type="InterPro" id="IPR046348">
    <property type="entry name" value="SIS_dom_sf"/>
</dbReference>
<dbReference type="NCBIfam" id="TIGR00274">
    <property type="entry name" value="N-acetylmuramic acid 6-phosphate etherase"/>
    <property type="match status" value="1"/>
</dbReference>
<dbReference type="NCBIfam" id="NF003915">
    <property type="entry name" value="PRK05441.1"/>
    <property type="match status" value="1"/>
</dbReference>
<dbReference type="NCBIfam" id="NF009222">
    <property type="entry name" value="PRK12570.1"/>
    <property type="match status" value="1"/>
</dbReference>
<dbReference type="PANTHER" id="PTHR10088">
    <property type="entry name" value="GLUCOKINASE REGULATORY PROTEIN"/>
    <property type="match status" value="1"/>
</dbReference>
<dbReference type="PANTHER" id="PTHR10088:SF4">
    <property type="entry name" value="GLUCOKINASE REGULATORY PROTEIN"/>
    <property type="match status" value="1"/>
</dbReference>
<dbReference type="Pfam" id="PF22645">
    <property type="entry name" value="GKRP_SIS_N"/>
    <property type="match status" value="1"/>
</dbReference>
<dbReference type="SUPFAM" id="SSF53697">
    <property type="entry name" value="SIS domain"/>
    <property type="match status" value="1"/>
</dbReference>
<dbReference type="PROSITE" id="PS01272">
    <property type="entry name" value="GCKR"/>
    <property type="match status" value="1"/>
</dbReference>
<dbReference type="PROSITE" id="PS51464">
    <property type="entry name" value="SIS"/>
    <property type="match status" value="1"/>
</dbReference>
<protein>
    <recommendedName>
        <fullName evidence="1">N-acetylmuramic acid 6-phosphate etherase</fullName>
        <shortName evidence="1">MurNAc-6-P etherase</shortName>
        <ecNumber evidence="1">4.2.1.126</ecNumber>
    </recommendedName>
    <alternativeName>
        <fullName evidence="1">N-acetylmuramic acid 6-phosphate hydrolase</fullName>
    </alternativeName>
    <alternativeName>
        <fullName evidence="1">N-acetylmuramic acid 6-phosphate lyase</fullName>
    </alternativeName>
</protein>